<name>CAPP_VIBPA</name>
<evidence type="ECO:0000255" key="1">
    <source>
        <dbReference type="HAMAP-Rule" id="MF_00595"/>
    </source>
</evidence>
<evidence type="ECO:0000305" key="2"/>
<proteinExistence type="inferred from homology"/>
<gene>
    <name evidence="1" type="primary">ppc</name>
    <name type="ordered locus">VP2761</name>
</gene>
<reference key="1">
    <citation type="journal article" date="2003" name="Lancet">
        <title>Genome sequence of Vibrio parahaemolyticus: a pathogenic mechanism distinct from that of V. cholerae.</title>
        <authorList>
            <person name="Makino K."/>
            <person name="Oshima K."/>
            <person name="Kurokawa K."/>
            <person name="Yokoyama K."/>
            <person name="Uda T."/>
            <person name="Tagomori K."/>
            <person name="Iijima Y."/>
            <person name="Najima M."/>
            <person name="Nakano M."/>
            <person name="Yamashita A."/>
            <person name="Kubota Y."/>
            <person name="Kimura S."/>
            <person name="Yasunaga T."/>
            <person name="Honda T."/>
            <person name="Shinagawa H."/>
            <person name="Hattori M."/>
            <person name="Iida T."/>
        </authorList>
    </citation>
    <scope>NUCLEOTIDE SEQUENCE [LARGE SCALE GENOMIC DNA]</scope>
    <source>
        <strain>RIMD 2210633</strain>
    </source>
</reference>
<keyword id="KW-0120">Carbon dioxide fixation</keyword>
<keyword id="KW-0456">Lyase</keyword>
<keyword id="KW-0460">Magnesium</keyword>
<organism>
    <name type="scientific">Vibrio parahaemolyticus serotype O3:K6 (strain RIMD 2210633)</name>
    <dbReference type="NCBI Taxonomy" id="223926"/>
    <lineage>
        <taxon>Bacteria</taxon>
        <taxon>Pseudomonadati</taxon>
        <taxon>Pseudomonadota</taxon>
        <taxon>Gammaproteobacteria</taxon>
        <taxon>Vibrionales</taxon>
        <taxon>Vibrionaceae</taxon>
        <taxon>Vibrio</taxon>
    </lineage>
</organism>
<sequence length="877" mass="99273">MNEKYAALKSNVRMLGHLLGNTIRDAHGEEIFEKVETIRKLSKSAQAGNQADRESLIEEIKHLPDEQLTPVTRAFNQFLNLTNIAEQYHTISRHCEEHICEPDAINSLFSKLVQNDVSKLDTAQAVRDLNIELVLTAHPTEITRRTMINKLVKINECLSKLELSDLSSKERKKTERRLEQLIAQSWHSDVIRQQRPTPLDEAKWGFAVVENSLWEAVPDFLREMNDRLKSYLGEGLPIDARPVHFSSWMGGDRDGNPFVTHSVTREVLLLSRWKAADLYLNDINELISELSMTVSNDQVRELAGEDQHEPYRAILKQLRALLNETKDILDAKIHGQKLAVKAPLQKVEQLWDPLYACYQSLHECGMGVIADGSLLDTLRRVKAFGVHLVRLDIRQESTRHADVLSELTRYLGIGDYEQWSEQDKIAFLTNELASKRPLLPRDWEPSEPVKEVLDTCKIIALQPREAFGAYVISMARTASDVLAVHLLLQEAGCPYRMDVCPLFETLDDLNNAESVIKQLMSIDLYRGFIQNHQMVMIGYSDSAKDAGVMSAGWAQYHAMESLVKVAEDEGVELTLFHGRGGTVGRGGAPAHAALLSQPPKSLKGGLRVTEQGEMIRFKLGLPDVAVNSFNLYASAILEANLLPPPEPKQEWRDLMEVLSEVSCEAYRGVVRGEPDFVPYFRQATPELELGKLPLGSRPAKRNPNGGVESLRAIPWIFSWSQNRLVLPAWLGAGEAIQYSVDKGHQALLEEMCREWPFFSTRLGMLEMVYTKCNMEISRYYDQRLVEPQLQPLGDRLREQLQRDIKSVLNVENNENLMQSDPWGQESIRLRNIYVEPLNMLQAELLYRTRQTEEASANLEEALMVTIAGIAAGMRNTG</sequence>
<comment type="function">
    <text evidence="1">Forms oxaloacetate, a four-carbon dicarboxylic acid source for the tricarboxylic acid cycle.</text>
</comment>
<comment type="catalytic activity">
    <reaction evidence="1">
        <text>oxaloacetate + phosphate = phosphoenolpyruvate + hydrogencarbonate</text>
        <dbReference type="Rhea" id="RHEA:28370"/>
        <dbReference type="ChEBI" id="CHEBI:16452"/>
        <dbReference type="ChEBI" id="CHEBI:17544"/>
        <dbReference type="ChEBI" id="CHEBI:43474"/>
        <dbReference type="ChEBI" id="CHEBI:58702"/>
        <dbReference type="EC" id="4.1.1.31"/>
    </reaction>
</comment>
<comment type="cofactor">
    <cofactor evidence="1">
        <name>Mg(2+)</name>
        <dbReference type="ChEBI" id="CHEBI:18420"/>
    </cofactor>
</comment>
<comment type="similarity">
    <text evidence="1">Belongs to the PEPCase type 1 family.</text>
</comment>
<comment type="sequence caution" evidence="2">
    <conflict type="erroneous initiation">
        <sequence resource="EMBL-CDS" id="BAC61024"/>
    </conflict>
</comment>
<accession>Q87L54</accession>
<feature type="chain" id="PRO_0000166648" description="Phosphoenolpyruvate carboxylase">
    <location>
        <begin position="1"/>
        <end position="877"/>
    </location>
</feature>
<feature type="active site" evidence="1">
    <location>
        <position position="138"/>
    </location>
</feature>
<feature type="active site" evidence="1">
    <location>
        <position position="544"/>
    </location>
</feature>
<protein>
    <recommendedName>
        <fullName evidence="1">Phosphoenolpyruvate carboxylase</fullName>
        <shortName evidence="1">PEPC</shortName>
        <shortName evidence="1">PEPCase</shortName>
        <ecNumber evidence="1">4.1.1.31</ecNumber>
    </recommendedName>
</protein>
<dbReference type="EC" id="4.1.1.31" evidence="1"/>
<dbReference type="EMBL" id="BA000031">
    <property type="protein sequence ID" value="BAC61024.1"/>
    <property type="status" value="ALT_INIT"/>
    <property type="molecule type" value="Genomic_DNA"/>
</dbReference>
<dbReference type="RefSeq" id="NP_799140.2">
    <property type="nucleotide sequence ID" value="NC_004603.1"/>
</dbReference>
<dbReference type="RefSeq" id="WP_005465143.1">
    <property type="nucleotide sequence ID" value="NC_004603.1"/>
</dbReference>
<dbReference type="SMR" id="Q87L54"/>
<dbReference type="GeneID" id="1190311"/>
<dbReference type="KEGG" id="vpa:VP2761"/>
<dbReference type="PATRIC" id="fig|223926.6.peg.2657"/>
<dbReference type="eggNOG" id="COG2352">
    <property type="taxonomic scope" value="Bacteria"/>
</dbReference>
<dbReference type="HOGENOM" id="CLU_006557_2_0_6"/>
<dbReference type="Proteomes" id="UP000002493">
    <property type="component" value="Chromosome 1"/>
</dbReference>
<dbReference type="GO" id="GO:0005829">
    <property type="term" value="C:cytosol"/>
    <property type="evidence" value="ECO:0007669"/>
    <property type="project" value="TreeGrafter"/>
</dbReference>
<dbReference type="GO" id="GO:0000287">
    <property type="term" value="F:magnesium ion binding"/>
    <property type="evidence" value="ECO:0007669"/>
    <property type="project" value="UniProtKB-UniRule"/>
</dbReference>
<dbReference type="GO" id="GO:0008964">
    <property type="term" value="F:phosphoenolpyruvate carboxylase activity"/>
    <property type="evidence" value="ECO:0007669"/>
    <property type="project" value="UniProtKB-UniRule"/>
</dbReference>
<dbReference type="GO" id="GO:0015977">
    <property type="term" value="P:carbon fixation"/>
    <property type="evidence" value="ECO:0007669"/>
    <property type="project" value="UniProtKB-UniRule"/>
</dbReference>
<dbReference type="GO" id="GO:0006107">
    <property type="term" value="P:oxaloacetate metabolic process"/>
    <property type="evidence" value="ECO:0007669"/>
    <property type="project" value="UniProtKB-UniRule"/>
</dbReference>
<dbReference type="GO" id="GO:0006099">
    <property type="term" value="P:tricarboxylic acid cycle"/>
    <property type="evidence" value="ECO:0007669"/>
    <property type="project" value="InterPro"/>
</dbReference>
<dbReference type="FunFam" id="1.20.1440.90:FF:000002">
    <property type="entry name" value="Phosphoenolpyruvate carboxylase"/>
    <property type="match status" value="1"/>
</dbReference>
<dbReference type="Gene3D" id="1.20.1440.90">
    <property type="entry name" value="Phosphoenolpyruvate/pyruvate domain"/>
    <property type="match status" value="1"/>
</dbReference>
<dbReference type="HAMAP" id="MF_00595">
    <property type="entry name" value="PEPcase_type1"/>
    <property type="match status" value="1"/>
</dbReference>
<dbReference type="InterPro" id="IPR021135">
    <property type="entry name" value="PEP_COase"/>
</dbReference>
<dbReference type="InterPro" id="IPR022805">
    <property type="entry name" value="PEP_COase_bac/pln-type"/>
</dbReference>
<dbReference type="InterPro" id="IPR018129">
    <property type="entry name" value="PEP_COase_Lys_AS"/>
</dbReference>
<dbReference type="InterPro" id="IPR033129">
    <property type="entry name" value="PEPCASE_His_AS"/>
</dbReference>
<dbReference type="InterPro" id="IPR015813">
    <property type="entry name" value="Pyrv/PenolPyrv_kinase-like_dom"/>
</dbReference>
<dbReference type="NCBIfam" id="NF000584">
    <property type="entry name" value="PRK00009.1"/>
    <property type="match status" value="1"/>
</dbReference>
<dbReference type="PANTHER" id="PTHR30523">
    <property type="entry name" value="PHOSPHOENOLPYRUVATE CARBOXYLASE"/>
    <property type="match status" value="1"/>
</dbReference>
<dbReference type="PANTHER" id="PTHR30523:SF6">
    <property type="entry name" value="PHOSPHOENOLPYRUVATE CARBOXYLASE"/>
    <property type="match status" value="1"/>
</dbReference>
<dbReference type="Pfam" id="PF00311">
    <property type="entry name" value="PEPcase"/>
    <property type="match status" value="1"/>
</dbReference>
<dbReference type="PRINTS" id="PR00150">
    <property type="entry name" value="PEPCARBXLASE"/>
</dbReference>
<dbReference type="SUPFAM" id="SSF51621">
    <property type="entry name" value="Phosphoenolpyruvate/pyruvate domain"/>
    <property type="match status" value="1"/>
</dbReference>
<dbReference type="PROSITE" id="PS00781">
    <property type="entry name" value="PEPCASE_1"/>
    <property type="match status" value="1"/>
</dbReference>
<dbReference type="PROSITE" id="PS00393">
    <property type="entry name" value="PEPCASE_2"/>
    <property type="match status" value="1"/>
</dbReference>